<gene>
    <name evidence="1" type="primary">rplB</name>
    <name type="ordered locus">C8J_1608</name>
</gene>
<feature type="chain" id="PRO_1000073227" description="Large ribosomal subunit protein uL2">
    <location>
        <begin position="1"/>
        <end position="276"/>
    </location>
</feature>
<feature type="region of interest" description="Disordered" evidence="2">
    <location>
        <begin position="210"/>
        <end position="276"/>
    </location>
</feature>
<feature type="compositionally biased region" description="Basic and acidic residues" evidence="2">
    <location>
        <begin position="230"/>
        <end position="240"/>
    </location>
</feature>
<feature type="compositionally biased region" description="Basic residues" evidence="2">
    <location>
        <begin position="255"/>
        <end position="276"/>
    </location>
</feature>
<comment type="function">
    <text evidence="1">One of the primary rRNA binding proteins. Required for association of the 30S and 50S subunits to form the 70S ribosome, for tRNA binding and peptide bond formation. It has been suggested to have peptidyltransferase activity; this is somewhat controversial. Makes several contacts with the 16S rRNA in the 70S ribosome.</text>
</comment>
<comment type="subunit">
    <text evidence="1">Part of the 50S ribosomal subunit. Forms a bridge to the 30S subunit in the 70S ribosome.</text>
</comment>
<comment type="similarity">
    <text evidence="1">Belongs to the universal ribosomal protein uL2 family.</text>
</comment>
<organism>
    <name type="scientific">Campylobacter jejuni subsp. jejuni serotype O:6 (strain 81116 / NCTC 11828)</name>
    <dbReference type="NCBI Taxonomy" id="407148"/>
    <lineage>
        <taxon>Bacteria</taxon>
        <taxon>Pseudomonadati</taxon>
        <taxon>Campylobacterota</taxon>
        <taxon>Epsilonproteobacteria</taxon>
        <taxon>Campylobacterales</taxon>
        <taxon>Campylobacteraceae</taxon>
        <taxon>Campylobacter</taxon>
    </lineage>
</organism>
<dbReference type="EMBL" id="CP000814">
    <property type="protein sequence ID" value="ABV53205.1"/>
    <property type="molecule type" value="Genomic_DNA"/>
</dbReference>
<dbReference type="RefSeq" id="WP_002825501.1">
    <property type="nucleotide sequence ID" value="NC_009839.1"/>
</dbReference>
<dbReference type="SMR" id="A8FP18"/>
<dbReference type="KEGG" id="cju:C8J_1608"/>
<dbReference type="HOGENOM" id="CLU_036235_2_1_7"/>
<dbReference type="GO" id="GO:0015934">
    <property type="term" value="C:large ribosomal subunit"/>
    <property type="evidence" value="ECO:0007669"/>
    <property type="project" value="InterPro"/>
</dbReference>
<dbReference type="GO" id="GO:0019843">
    <property type="term" value="F:rRNA binding"/>
    <property type="evidence" value="ECO:0007669"/>
    <property type="project" value="UniProtKB-UniRule"/>
</dbReference>
<dbReference type="GO" id="GO:0003735">
    <property type="term" value="F:structural constituent of ribosome"/>
    <property type="evidence" value="ECO:0007669"/>
    <property type="project" value="InterPro"/>
</dbReference>
<dbReference type="GO" id="GO:0016740">
    <property type="term" value="F:transferase activity"/>
    <property type="evidence" value="ECO:0007669"/>
    <property type="project" value="InterPro"/>
</dbReference>
<dbReference type="GO" id="GO:0002181">
    <property type="term" value="P:cytoplasmic translation"/>
    <property type="evidence" value="ECO:0007669"/>
    <property type="project" value="TreeGrafter"/>
</dbReference>
<dbReference type="FunFam" id="2.30.30.30:FF:000001">
    <property type="entry name" value="50S ribosomal protein L2"/>
    <property type="match status" value="1"/>
</dbReference>
<dbReference type="FunFam" id="2.40.50.140:FF:000003">
    <property type="entry name" value="50S ribosomal protein L2"/>
    <property type="match status" value="1"/>
</dbReference>
<dbReference type="FunFam" id="4.10.950.10:FF:000001">
    <property type="entry name" value="50S ribosomal protein L2"/>
    <property type="match status" value="1"/>
</dbReference>
<dbReference type="Gene3D" id="2.30.30.30">
    <property type="match status" value="1"/>
</dbReference>
<dbReference type="Gene3D" id="2.40.50.140">
    <property type="entry name" value="Nucleic acid-binding proteins"/>
    <property type="match status" value="1"/>
</dbReference>
<dbReference type="Gene3D" id="4.10.950.10">
    <property type="entry name" value="Ribosomal protein L2, domain 3"/>
    <property type="match status" value="1"/>
</dbReference>
<dbReference type="HAMAP" id="MF_01320_B">
    <property type="entry name" value="Ribosomal_uL2_B"/>
    <property type="match status" value="1"/>
</dbReference>
<dbReference type="InterPro" id="IPR012340">
    <property type="entry name" value="NA-bd_OB-fold"/>
</dbReference>
<dbReference type="InterPro" id="IPR014722">
    <property type="entry name" value="Rib_uL2_dom2"/>
</dbReference>
<dbReference type="InterPro" id="IPR002171">
    <property type="entry name" value="Ribosomal_uL2"/>
</dbReference>
<dbReference type="InterPro" id="IPR005880">
    <property type="entry name" value="Ribosomal_uL2_bac/org-type"/>
</dbReference>
<dbReference type="InterPro" id="IPR022669">
    <property type="entry name" value="Ribosomal_uL2_C"/>
</dbReference>
<dbReference type="InterPro" id="IPR022671">
    <property type="entry name" value="Ribosomal_uL2_CS"/>
</dbReference>
<dbReference type="InterPro" id="IPR014726">
    <property type="entry name" value="Ribosomal_uL2_dom3"/>
</dbReference>
<dbReference type="InterPro" id="IPR022666">
    <property type="entry name" value="Ribosomal_uL2_RNA-bd_dom"/>
</dbReference>
<dbReference type="InterPro" id="IPR008991">
    <property type="entry name" value="Translation_prot_SH3-like_sf"/>
</dbReference>
<dbReference type="NCBIfam" id="TIGR01171">
    <property type="entry name" value="rplB_bact"/>
    <property type="match status" value="1"/>
</dbReference>
<dbReference type="PANTHER" id="PTHR13691:SF5">
    <property type="entry name" value="LARGE RIBOSOMAL SUBUNIT PROTEIN UL2M"/>
    <property type="match status" value="1"/>
</dbReference>
<dbReference type="PANTHER" id="PTHR13691">
    <property type="entry name" value="RIBOSOMAL PROTEIN L2"/>
    <property type="match status" value="1"/>
</dbReference>
<dbReference type="Pfam" id="PF00181">
    <property type="entry name" value="Ribosomal_L2"/>
    <property type="match status" value="1"/>
</dbReference>
<dbReference type="Pfam" id="PF03947">
    <property type="entry name" value="Ribosomal_L2_C"/>
    <property type="match status" value="1"/>
</dbReference>
<dbReference type="PIRSF" id="PIRSF002158">
    <property type="entry name" value="Ribosomal_L2"/>
    <property type="match status" value="1"/>
</dbReference>
<dbReference type="SMART" id="SM01383">
    <property type="entry name" value="Ribosomal_L2"/>
    <property type="match status" value="1"/>
</dbReference>
<dbReference type="SMART" id="SM01382">
    <property type="entry name" value="Ribosomal_L2_C"/>
    <property type="match status" value="1"/>
</dbReference>
<dbReference type="SUPFAM" id="SSF50249">
    <property type="entry name" value="Nucleic acid-binding proteins"/>
    <property type="match status" value="1"/>
</dbReference>
<dbReference type="SUPFAM" id="SSF50104">
    <property type="entry name" value="Translation proteins SH3-like domain"/>
    <property type="match status" value="1"/>
</dbReference>
<dbReference type="PROSITE" id="PS00467">
    <property type="entry name" value="RIBOSOMAL_L2"/>
    <property type="match status" value="1"/>
</dbReference>
<accession>A8FP18</accession>
<proteinExistence type="inferred from homology"/>
<protein>
    <recommendedName>
        <fullName evidence="1">Large ribosomal subunit protein uL2</fullName>
    </recommendedName>
    <alternativeName>
        <fullName evidence="3">50S ribosomal protein L2</fullName>
    </alternativeName>
</protein>
<sequence length="276" mass="30420">MAIKTYKPYTPSRRYITGLSSEDITAKPSVRSLLVKLPAHAGRNSYGRITSRHKEAGAKKLYRIIDFKRRKFGIEGKVEAIEYDPYRNCRIALIAYKDGEKRYILQPRGLSVGDIVAAAESGLDIKPGNAMKLKNIPVGTIVHNVELKPGKGGQMIRSAGAYAQLMGKEEKYVILRLASGEMRQVLAECMASIGEVGNEEWANVTIGKAGRNRHRGIRPQTRGSAMNPVDHPHGGGEGKKNSGRHPVTPWGKPTKGAKTRRKKASDKLIISRRKGK</sequence>
<evidence type="ECO:0000255" key="1">
    <source>
        <dbReference type="HAMAP-Rule" id="MF_01320"/>
    </source>
</evidence>
<evidence type="ECO:0000256" key="2">
    <source>
        <dbReference type="SAM" id="MobiDB-lite"/>
    </source>
</evidence>
<evidence type="ECO:0000305" key="3"/>
<keyword id="KW-0687">Ribonucleoprotein</keyword>
<keyword id="KW-0689">Ribosomal protein</keyword>
<keyword id="KW-0694">RNA-binding</keyword>
<keyword id="KW-0699">rRNA-binding</keyword>
<reference key="1">
    <citation type="journal article" date="2007" name="J. Bacteriol.">
        <title>The complete genome sequence of Campylobacter jejuni strain 81116 (NCTC11828).</title>
        <authorList>
            <person name="Pearson B.M."/>
            <person name="Gaskin D.J.H."/>
            <person name="Segers R.P.A.M."/>
            <person name="Wells J.M."/>
            <person name="Nuijten P.J.M."/>
            <person name="van Vliet A.H.M."/>
        </authorList>
    </citation>
    <scope>NUCLEOTIDE SEQUENCE [LARGE SCALE GENOMIC DNA]</scope>
    <source>
        <strain>81116 / NCTC 11828</strain>
    </source>
</reference>
<name>RL2_CAMJ8</name>